<protein>
    <recommendedName>
        <fullName evidence="1">Cathelicidin antimicrobial peptide</fullName>
    </recommendedName>
    <component>
        <recommendedName>
            <fullName evidence="1">Antibacterial peptide FALL-39</fullName>
        </recommendedName>
        <alternativeName>
            <fullName evidence="1">FALL-39 peptide antibiotic</fullName>
        </alternativeName>
    </component>
    <component>
        <recommendedName>
            <fullName evidence="1">Antibacterial peptide LL-37</fullName>
        </recommendedName>
    </component>
</protein>
<dbReference type="EMBL" id="DQ471367">
    <property type="protein sequence ID" value="ABE96631.1"/>
    <property type="molecule type" value="Genomic_DNA"/>
</dbReference>
<dbReference type="SMR" id="Q1KLX5"/>
<dbReference type="GO" id="GO:0005615">
    <property type="term" value="C:extracellular space"/>
    <property type="evidence" value="ECO:0007669"/>
    <property type="project" value="TreeGrafter"/>
</dbReference>
<dbReference type="GO" id="GO:0031982">
    <property type="term" value="C:vesicle"/>
    <property type="evidence" value="ECO:0007669"/>
    <property type="project" value="UniProtKB-SubCell"/>
</dbReference>
<dbReference type="GO" id="GO:0001530">
    <property type="term" value="F:lipopolysaccharide binding"/>
    <property type="evidence" value="ECO:0007669"/>
    <property type="project" value="TreeGrafter"/>
</dbReference>
<dbReference type="GO" id="GO:0061844">
    <property type="term" value="P:antimicrobial humoral immune response mediated by antimicrobial peptide"/>
    <property type="evidence" value="ECO:0007669"/>
    <property type="project" value="TreeGrafter"/>
</dbReference>
<dbReference type="GO" id="GO:0050829">
    <property type="term" value="P:defense response to Gram-negative bacterium"/>
    <property type="evidence" value="ECO:0007669"/>
    <property type="project" value="TreeGrafter"/>
</dbReference>
<dbReference type="GO" id="GO:0050830">
    <property type="term" value="P:defense response to Gram-positive bacterium"/>
    <property type="evidence" value="ECO:0007669"/>
    <property type="project" value="TreeGrafter"/>
</dbReference>
<dbReference type="GO" id="GO:0045087">
    <property type="term" value="P:innate immune response"/>
    <property type="evidence" value="ECO:0007669"/>
    <property type="project" value="UniProtKB-KW"/>
</dbReference>
<dbReference type="GO" id="GO:0042119">
    <property type="term" value="P:neutrophil activation"/>
    <property type="evidence" value="ECO:0000250"/>
    <property type="project" value="UniProtKB"/>
</dbReference>
<dbReference type="FunFam" id="3.10.450.10:FF:000003">
    <property type="entry name" value="Cathelicidin antimicrobial peptide"/>
    <property type="match status" value="1"/>
</dbReference>
<dbReference type="Gene3D" id="3.10.450.10">
    <property type="match status" value="1"/>
</dbReference>
<dbReference type="InterPro" id="IPR001894">
    <property type="entry name" value="Cathelicidin-like"/>
</dbReference>
<dbReference type="InterPro" id="IPR018216">
    <property type="entry name" value="Cathelicidin_CS"/>
</dbReference>
<dbReference type="InterPro" id="IPR022746">
    <property type="entry name" value="Cathlecidin_C"/>
</dbReference>
<dbReference type="InterPro" id="IPR046350">
    <property type="entry name" value="Cystatin_sf"/>
</dbReference>
<dbReference type="PANTHER" id="PTHR10206">
    <property type="entry name" value="CATHELICIDIN"/>
    <property type="match status" value="1"/>
</dbReference>
<dbReference type="PANTHER" id="PTHR10206:SF2">
    <property type="entry name" value="CATHELICIDIN ANTIMICROBIAL PEPTIDE"/>
    <property type="match status" value="1"/>
</dbReference>
<dbReference type="Pfam" id="PF12153">
    <property type="entry name" value="CAP18_C"/>
    <property type="match status" value="1"/>
</dbReference>
<dbReference type="Pfam" id="PF00666">
    <property type="entry name" value="Cathelicidins"/>
    <property type="match status" value="1"/>
</dbReference>
<dbReference type="SUPFAM" id="SSF54403">
    <property type="entry name" value="Cystatin/monellin"/>
    <property type="match status" value="1"/>
</dbReference>
<dbReference type="PROSITE" id="PS00946">
    <property type="entry name" value="CATHELICIDINS_1"/>
    <property type="match status" value="1"/>
</dbReference>
<dbReference type="PROSITE" id="PS00947">
    <property type="entry name" value="CATHELICIDINS_2"/>
    <property type="match status" value="1"/>
</dbReference>
<sequence>MKTQRHGPSLGRWSLVLLLLGLVMPLAIVAQVLSYQEAVLRALDGINQRSSDANLYRLLDLDPRPTMDGDPDTPKPVSFTVKETVCPRTTQKSPQDCDFKEDGLVKRCVGTVILNQARDSFDISCDKDNRRFARLGNFFRKAKEKIGRGLKKIGQKIKDFWGNLVPRTES</sequence>
<organism>
    <name type="scientific">Trachypithecus cristatus</name>
    <name type="common">Silvered leaf-monkey</name>
    <name type="synonym">Presbytis cristata</name>
    <dbReference type="NCBI Taxonomy" id="122765"/>
    <lineage>
        <taxon>Eukaryota</taxon>
        <taxon>Metazoa</taxon>
        <taxon>Chordata</taxon>
        <taxon>Craniata</taxon>
        <taxon>Vertebrata</taxon>
        <taxon>Euteleostomi</taxon>
        <taxon>Mammalia</taxon>
        <taxon>Eutheria</taxon>
        <taxon>Euarchontoglires</taxon>
        <taxon>Primates</taxon>
        <taxon>Haplorrhini</taxon>
        <taxon>Catarrhini</taxon>
        <taxon>Cercopithecidae</taxon>
        <taxon>Colobinae</taxon>
        <taxon>Trachypithecus</taxon>
    </lineage>
</organism>
<evidence type="ECO:0000250" key="1">
    <source>
        <dbReference type="UniProtKB" id="P49913"/>
    </source>
</evidence>
<evidence type="ECO:0000250" key="2">
    <source>
        <dbReference type="UniProtKB" id="P54229"/>
    </source>
</evidence>
<evidence type="ECO:0000255" key="3"/>
<evidence type="ECO:0000305" key="4"/>
<accession>Q1KLX5</accession>
<reference key="1">
    <citation type="journal article" date="2006" name="J. Biol. Chem.">
        <title>Evolution of the primate cathelicidin. Correlation between structural variations and antimicrobial activity.</title>
        <authorList>
            <person name="Zelezetsky I."/>
            <person name="Pontillo A."/>
            <person name="Puzzi L."/>
            <person name="Antcheva N."/>
            <person name="Segat L."/>
            <person name="Pacor S."/>
            <person name="Crovella S."/>
            <person name="Tossi A."/>
        </authorList>
    </citation>
    <scope>NUCLEOTIDE SEQUENCE [GENOMIC DNA]</scope>
</reference>
<proteinExistence type="inferred from homology"/>
<feature type="signal peptide" evidence="3">
    <location>
        <begin position="1"/>
        <end position="30"/>
    </location>
</feature>
<feature type="propeptide" id="PRO_0000251785" description="Cathelin-like domain (CLD)" evidence="1">
    <location>
        <begin position="31"/>
        <end position="131"/>
    </location>
</feature>
<feature type="peptide" id="PRO_0000251786" description="Antibacterial peptide FALL-39" evidence="1">
    <location>
        <begin position="132"/>
        <end position="170"/>
    </location>
</feature>
<feature type="peptide" id="PRO_0000251787" description="Antibacterial peptide LL-37" evidence="1">
    <location>
        <begin position="134"/>
        <end position="170"/>
    </location>
</feature>
<feature type="region of interest" description="Active core" evidence="1">
    <location>
        <begin position="150"/>
        <end position="162"/>
    </location>
</feature>
<feature type="disulfide bond" evidence="1">
    <location>
        <begin position="86"/>
        <end position="97"/>
    </location>
</feature>
<feature type="disulfide bond" evidence="1">
    <location>
        <begin position="108"/>
        <end position="125"/>
    </location>
</feature>
<keyword id="KW-0044">Antibiotic</keyword>
<keyword id="KW-0929">Antimicrobial</keyword>
<keyword id="KW-0165">Cleavage on pair of basic residues</keyword>
<keyword id="KW-1015">Disulfide bond</keyword>
<keyword id="KW-0391">Immunity</keyword>
<keyword id="KW-0399">Innate immunity</keyword>
<keyword id="KW-0964">Secreted</keyword>
<keyword id="KW-0732">Signal</keyword>
<comment type="function">
    <text evidence="1">Antimicrobial protein that is an integral component of the innate immune system (By similarity). Binds to bacterial lipopolysaccharides (LPS) (By similarity). Acts via neutrophil N-formyl peptide receptors to enhance the release of CXCL2 (By similarity). Postsecretory processing generates multiple cathelicidin antimicrobial peptides with various lengths which act as a topical antimicrobial defense in sweat on skin (By similarity). The unprocessed precursor form, cathelicidin antimicrobial peptide, inhibits the growth of Gram-negative E.coli and E.aerogenes with efficiencies comparable to that of the mature peptide LL-37 (in vitro) (By similarity).</text>
</comment>
<comment type="function">
    <molecule>Antibacterial peptide LL-37</molecule>
    <text evidence="1">Antimicrobial peptide that is an integral component of the innate immune system (By similarity). Binds to bacterial lipopolysaccharides (LPS) (By similarity). Causes membrane permeabilization by forming transmembrane pores (in vitro) (By similarity). Causes lysis of E.coli (By similarity). Exhibits antimicrobial activity against Gram-negative bacteria such as P.aeruginosa, S.typhimurium, E.aerogenes, E.coli and P.syringae, Gram-positive bacteria such as L.monocytogenes, S.epidermidis, S.pyogenes and S.aureus, as well as vancomycin-resistant enterococci (in vitro) (By similarity). Exhibits antimicrobial activity against methicillin-resistant S.aureus, P.mirabilis, and C.albicans in low-salt media, but not in media containing 100 mM NaCl (in vitro) (By similarity). Forms chiral supramolecular assemblies with quinolone signal (PQS) molecules of P.aeruginosa, which may lead to interference of bacterial quorum signaling and perturbance of bacterial biofilm formation (By similarity). May form supramolecular fiber-like assemblies on bacterial membranes (By similarity). Induces cytokine and chemokine producation as well as TNF/TNFA and CSF2/GMCSF production in normal human keratinocytes (By similarity). Exhibits hemolytic activity against red blood cells (By similarity).</text>
</comment>
<comment type="function">
    <molecule>Antibacterial peptide FALL-39</molecule>
    <text evidence="1">Exhibits antimicrobial activity against E.coli and B.megaterium (in vitro).</text>
</comment>
<comment type="subunit">
    <molecule>Antibacterial peptide LL-37</molecule>
    <text evidence="1">Monomer, homodimer or homotrimer (in vitro) (By similarity). Oligomerizes as tetra- or hexamer in solution (in vitro) (By similarity).</text>
</comment>
<comment type="subcellular location">
    <subcellularLocation>
        <location evidence="2">Secreted</location>
    </subcellularLocation>
    <subcellularLocation>
        <location evidence="2">Vesicle</location>
    </subcellularLocation>
    <text evidence="2">Stored as pro-peptide in granules and phagolysosomes of neutrophils (By similarity). Secreted in sweat onto skin (By similarity).</text>
</comment>
<comment type="domain">
    <text evidence="2">The cathelin-like domain (CLD), which is the propeptide part, does not seem to exhibit auto-inhibitory function, as it does not inhibit the antibacterial activity of antibacterial peptide LL-37.</text>
</comment>
<comment type="domain">
    <molecule>Antibacterial peptide LL-37</molecule>
    <text evidence="2">Undergoes conformational change in the presence of lipid A, transitioning from a random coil to an alpha-helical structure.</text>
</comment>
<comment type="domain">
    <molecule>Antibacterial peptide LL-37</molecule>
    <text evidence="2">Residues 17-29 of LL-37 represent the active core of the antimicrobial peptide. Forms ribbon-like fibrils and exhibits antibacterial activity against Gram-positive M.luteus (By similarity). Also exhibits antibacterial activity against Gram-negative E.coli and P.fluorescens (By similarity).</text>
</comment>
<comment type="PTM">
    <text evidence="1">Proteolytically cleaved by proteinase PRTN3 into antibacterial peptide LL-37 (By similarity). Proteolytically cleaved by cathepsin CTSG and neutrophil elastase ELANE (By similarity).</text>
</comment>
<comment type="PTM">
    <molecule>Antibacterial peptide LL-37</molecule>
    <text evidence="1">Resistant to proteolytic degradation in solution, and when bound to both zwitterionic (mimicking mammalian membranes) and negatively charged membranes (mimicking bacterial membranes).</text>
</comment>
<comment type="PTM">
    <text evidence="1">After secretion onto the skin surface, the CAMP gene product is processed by a serine protease-dependent mechanism into multiple novel antimicrobial peptides distinct from and shorter than cathelicidin LL-37 (By similarity). These peptides show enhanced antimicrobial action, acquiring the ability to kill skin pathogens such as S.aureus, E.coli and C.albicans. These peptides have lost the ability to stimulate CXCL8/IL8 release from keratinocytes (By similarity). The peptides act synergistically, killing bacteria at lower concentrations when present together, and maintain activity at increased salt condition (By similarity).</text>
</comment>
<comment type="similarity">
    <text evidence="4">Belongs to the cathelicidin family.</text>
</comment>
<gene>
    <name evidence="1" type="primary">CAMP</name>
</gene>
<name>CAMP_TRACR</name>